<proteinExistence type="inferred from homology"/>
<name>TATB_SHEPA</name>
<reference key="1">
    <citation type="submission" date="2007-10" db="EMBL/GenBank/DDBJ databases">
        <title>Complete sequence of Shewanella pealeana ATCC 700345.</title>
        <authorList>
            <consortium name="US DOE Joint Genome Institute"/>
            <person name="Copeland A."/>
            <person name="Lucas S."/>
            <person name="Lapidus A."/>
            <person name="Barry K."/>
            <person name="Glavina del Rio T."/>
            <person name="Dalin E."/>
            <person name="Tice H."/>
            <person name="Pitluck S."/>
            <person name="Chertkov O."/>
            <person name="Brettin T."/>
            <person name="Bruce D."/>
            <person name="Detter J.C."/>
            <person name="Han C."/>
            <person name="Schmutz J."/>
            <person name="Larimer F."/>
            <person name="Land M."/>
            <person name="Hauser L."/>
            <person name="Kyrpides N."/>
            <person name="Kim E."/>
            <person name="Zhao J.-S.Z."/>
            <person name="Manno D."/>
            <person name="Hawari J."/>
            <person name="Richardson P."/>
        </authorList>
    </citation>
    <scope>NUCLEOTIDE SEQUENCE [LARGE SCALE GENOMIC DNA]</scope>
    <source>
        <strain>ATCC 700345 / ANG-SQ1</strain>
    </source>
</reference>
<dbReference type="EMBL" id="CP000851">
    <property type="protein sequence ID" value="ABV89107.1"/>
    <property type="molecule type" value="Genomic_DNA"/>
</dbReference>
<dbReference type="RefSeq" id="WP_012156989.1">
    <property type="nucleotide sequence ID" value="NC_009901.1"/>
</dbReference>
<dbReference type="SMR" id="A8H970"/>
<dbReference type="STRING" id="398579.Spea_3796"/>
<dbReference type="KEGG" id="spl:Spea_3796"/>
<dbReference type="eggNOG" id="COG1826">
    <property type="taxonomic scope" value="Bacteria"/>
</dbReference>
<dbReference type="HOGENOM" id="CLU_086034_1_0_6"/>
<dbReference type="OrthoDB" id="9816005at2"/>
<dbReference type="Proteomes" id="UP000002608">
    <property type="component" value="Chromosome"/>
</dbReference>
<dbReference type="GO" id="GO:0033281">
    <property type="term" value="C:TAT protein transport complex"/>
    <property type="evidence" value="ECO:0007669"/>
    <property type="project" value="UniProtKB-UniRule"/>
</dbReference>
<dbReference type="GO" id="GO:0008320">
    <property type="term" value="F:protein transmembrane transporter activity"/>
    <property type="evidence" value="ECO:0007669"/>
    <property type="project" value="UniProtKB-UniRule"/>
</dbReference>
<dbReference type="GO" id="GO:0043953">
    <property type="term" value="P:protein transport by the Tat complex"/>
    <property type="evidence" value="ECO:0007669"/>
    <property type="project" value="UniProtKB-UniRule"/>
</dbReference>
<dbReference type="Gene3D" id="1.20.5.3310">
    <property type="match status" value="1"/>
</dbReference>
<dbReference type="HAMAP" id="MF_00237">
    <property type="entry name" value="TatB"/>
    <property type="match status" value="1"/>
</dbReference>
<dbReference type="InterPro" id="IPR003369">
    <property type="entry name" value="TatA/B/E"/>
</dbReference>
<dbReference type="InterPro" id="IPR018448">
    <property type="entry name" value="TatB"/>
</dbReference>
<dbReference type="NCBIfam" id="TIGR01410">
    <property type="entry name" value="tatB"/>
    <property type="match status" value="1"/>
</dbReference>
<dbReference type="PANTHER" id="PTHR33162">
    <property type="entry name" value="SEC-INDEPENDENT PROTEIN TRANSLOCASE PROTEIN TATA, CHLOROPLASTIC"/>
    <property type="match status" value="1"/>
</dbReference>
<dbReference type="PANTHER" id="PTHR33162:SF1">
    <property type="entry name" value="SEC-INDEPENDENT PROTEIN TRANSLOCASE PROTEIN TATA, CHLOROPLASTIC"/>
    <property type="match status" value="1"/>
</dbReference>
<dbReference type="Pfam" id="PF02416">
    <property type="entry name" value="TatA_B_E"/>
    <property type="match status" value="1"/>
</dbReference>
<dbReference type="PRINTS" id="PR01506">
    <property type="entry name" value="TATBPROTEIN"/>
</dbReference>
<protein>
    <recommendedName>
        <fullName evidence="1">Sec-independent protein translocase protein TatB</fullName>
    </recommendedName>
</protein>
<accession>A8H970</accession>
<feature type="chain" id="PRO_1000078327" description="Sec-independent protein translocase protein TatB">
    <location>
        <begin position="1"/>
        <end position="131"/>
    </location>
</feature>
<feature type="transmembrane region" description="Helical" evidence="1">
    <location>
        <begin position="2"/>
        <end position="22"/>
    </location>
</feature>
<feature type="region of interest" description="Disordered" evidence="2">
    <location>
        <begin position="68"/>
        <end position="131"/>
    </location>
</feature>
<feature type="compositionally biased region" description="Polar residues" evidence="2">
    <location>
        <begin position="68"/>
        <end position="83"/>
    </location>
</feature>
<feature type="compositionally biased region" description="Polar residues" evidence="2">
    <location>
        <begin position="116"/>
        <end position="131"/>
    </location>
</feature>
<evidence type="ECO:0000255" key="1">
    <source>
        <dbReference type="HAMAP-Rule" id="MF_00237"/>
    </source>
</evidence>
<evidence type="ECO:0000256" key="2">
    <source>
        <dbReference type="SAM" id="MobiDB-lite"/>
    </source>
</evidence>
<comment type="function">
    <text evidence="1">Part of the twin-arginine translocation (Tat) system that transports large folded proteins containing a characteristic twin-arginine motif in their signal peptide across membranes. Together with TatC, TatB is part of a receptor directly interacting with Tat signal peptides. TatB may form an oligomeric binding site that transiently accommodates folded Tat precursor proteins before their translocation.</text>
</comment>
<comment type="subunit">
    <text evidence="1">The Tat system comprises two distinct complexes: a TatABC complex, containing multiple copies of TatA, TatB and TatC subunits, and a separate TatA complex, containing only TatA subunits. Substrates initially bind to the TatABC complex, which probably triggers association of the separate TatA complex to form the active translocon.</text>
</comment>
<comment type="subcellular location">
    <subcellularLocation>
        <location evidence="1">Cell inner membrane</location>
        <topology evidence="1">Single-pass membrane protein</topology>
    </subcellularLocation>
</comment>
<comment type="similarity">
    <text evidence="1">Belongs to the TatB family.</text>
</comment>
<gene>
    <name evidence="1" type="primary">tatB</name>
    <name type="ordered locus">Spea_3796</name>
</gene>
<keyword id="KW-0997">Cell inner membrane</keyword>
<keyword id="KW-1003">Cell membrane</keyword>
<keyword id="KW-0472">Membrane</keyword>
<keyword id="KW-0653">Protein transport</keyword>
<keyword id="KW-1185">Reference proteome</keyword>
<keyword id="KW-0811">Translocation</keyword>
<keyword id="KW-0812">Transmembrane</keyword>
<keyword id="KW-1133">Transmembrane helix</keyword>
<keyword id="KW-0813">Transport</keyword>
<sequence length="131" mass="14288">MFDGIGFMELLLIGILGLVVLGPERLPTAVRSISSWIRAMKKMANSVKDELEQELKIEQLHSDLKNAESQGLKNLSPELQDSIDQLKEAAQSVNRPYQVEDVPAAKETPAKETPTAEKSTTTGANSDKPNG</sequence>
<organism>
    <name type="scientific">Shewanella pealeana (strain ATCC 700345 / ANG-SQ1)</name>
    <dbReference type="NCBI Taxonomy" id="398579"/>
    <lineage>
        <taxon>Bacteria</taxon>
        <taxon>Pseudomonadati</taxon>
        <taxon>Pseudomonadota</taxon>
        <taxon>Gammaproteobacteria</taxon>
        <taxon>Alteromonadales</taxon>
        <taxon>Shewanellaceae</taxon>
        <taxon>Shewanella</taxon>
    </lineage>
</organism>